<protein>
    <recommendedName>
        <fullName evidence="4">Large ribosomal subunit protein bL20m</fullName>
    </recommendedName>
    <alternativeName>
        <fullName>39S ribosomal protein L20, mitochondrial</fullName>
        <shortName>L20mt</shortName>
        <shortName>MRP-L20</shortName>
    </alternativeName>
</protein>
<keyword id="KW-0002">3D-structure</keyword>
<keyword id="KW-0903">Direct protein sequencing</keyword>
<keyword id="KW-0496">Mitochondrion</keyword>
<keyword id="KW-1185">Reference proteome</keyword>
<keyword id="KW-0687">Ribonucleoprotein</keyword>
<keyword id="KW-0689">Ribosomal protein</keyword>
<keyword id="KW-0809">Transit peptide</keyword>
<dbReference type="EMBL" id="BC109775">
    <property type="protein sequence ID" value="AAI09776.1"/>
    <property type="molecule type" value="mRNA"/>
</dbReference>
<dbReference type="RefSeq" id="NP_001033595.1">
    <property type="nucleotide sequence ID" value="NM_001038506.2"/>
</dbReference>
<dbReference type="PDB" id="2FTC">
    <property type="method" value="EM"/>
    <property type="chains" value="L=8-124"/>
</dbReference>
<dbReference type="PDBsum" id="2FTC"/>
<dbReference type="SMR" id="Q2TBR2"/>
<dbReference type="FunCoup" id="Q2TBR2">
    <property type="interactions" value="1196"/>
</dbReference>
<dbReference type="STRING" id="9913.ENSBTAP00000006406"/>
<dbReference type="PaxDb" id="9913-ENSBTAP00000006406"/>
<dbReference type="GeneID" id="506358"/>
<dbReference type="KEGG" id="bta:506358"/>
<dbReference type="CTD" id="55052"/>
<dbReference type="eggNOG" id="KOG4707">
    <property type="taxonomic scope" value="Eukaryota"/>
</dbReference>
<dbReference type="HOGENOM" id="CLU_123265_1_1_1"/>
<dbReference type="InParanoid" id="Q2TBR2"/>
<dbReference type="OrthoDB" id="10251781at2759"/>
<dbReference type="TreeFam" id="TF324702"/>
<dbReference type="EvolutionaryTrace" id="Q2TBR2"/>
<dbReference type="Proteomes" id="UP000009136">
    <property type="component" value="Unplaced"/>
</dbReference>
<dbReference type="GO" id="GO:0005743">
    <property type="term" value="C:mitochondrial inner membrane"/>
    <property type="evidence" value="ECO:0000304"/>
    <property type="project" value="Reactome"/>
</dbReference>
<dbReference type="GO" id="GO:0005762">
    <property type="term" value="C:mitochondrial large ribosomal subunit"/>
    <property type="evidence" value="ECO:0000250"/>
    <property type="project" value="UniProtKB"/>
</dbReference>
<dbReference type="GO" id="GO:0005761">
    <property type="term" value="C:mitochondrial ribosome"/>
    <property type="evidence" value="ECO:0000250"/>
    <property type="project" value="UniProtKB"/>
</dbReference>
<dbReference type="GO" id="GO:0019843">
    <property type="term" value="F:rRNA binding"/>
    <property type="evidence" value="ECO:0007669"/>
    <property type="project" value="InterPro"/>
</dbReference>
<dbReference type="GO" id="GO:0003735">
    <property type="term" value="F:structural constituent of ribosome"/>
    <property type="evidence" value="ECO:0000318"/>
    <property type="project" value="GO_Central"/>
</dbReference>
<dbReference type="GO" id="GO:0006412">
    <property type="term" value="P:translation"/>
    <property type="evidence" value="ECO:0007669"/>
    <property type="project" value="InterPro"/>
</dbReference>
<dbReference type="CDD" id="cd07026">
    <property type="entry name" value="Ribosomal_L20"/>
    <property type="match status" value="1"/>
</dbReference>
<dbReference type="FunFam" id="1.10.1900.20:FF:000001">
    <property type="entry name" value="50S ribosomal protein L20"/>
    <property type="match status" value="1"/>
</dbReference>
<dbReference type="Gene3D" id="6.10.160.10">
    <property type="match status" value="1"/>
</dbReference>
<dbReference type="Gene3D" id="1.10.1900.20">
    <property type="entry name" value="Ribosomal protein L20"/>
    <property type="match status" value="1"/>
</dbReference>
<dbReference type="InterPro" id="IPR005813">
    <property type="entry name" value="Ribosomal_bL20"/>
</dbReference>
<dbReference type="InterPro" id="IPR035566">
    <property type="entry name" value="Ribosomal_protein_bL20_C"/>
</dbReference>
<dbReference type="NCBIfam" id="TIGR01032">
    <property type="entry name" value="rplT_bact"/>
    <property type="match status" value="1"/>
</dbReference>
<dbReference type="PANTHER" id="PTHR10986">
    <property type="entry name" value="39S RIBOSOMAL PROTEIN L20"/>
    <property type="match status" value="1"/>
</dbReference>
<dbReference type="Pfam" id="PF00453">
    <property type="entry name" value="Ribosomal_L20"/>
    <property type="match status" value="1"/>
</dbReference>
<dbReference type="PRINTS" id="PR00062">
    <property type="entry name" value="RIBOSOMALL20"/>
</dbReference>
<dbReference type="SUPFAM" id="SSF74731">
    <property type="entry name" value="Ribosomal protein L20"/>
    <property type="match status" value="1"/>
</dbReference>
<proteinExistence type="evidence at protein level"/>
<feature type="transit peptide" description="Mitochondrion" evidence="1">
    <location>
        <begin position="1"/>
        <end position="9"/>
    </location>
</feature>
<feature type="chain" id="PRO_0000248278" description="Large ribosomal subunit protein bL20m">
    <location>
        <begin position="10"/>
        <end position="149"/>
    </location>
</feature>
<gene>
    <name type="primary">MRPL20</name>
</gene>
<sequence>MVFLSAPLWLRNRITDRYWRVQEVLKHARHFRGRKNRCYRLAVRAVTRAFVRCTRARSLKKRHLRTLWINRITAASQEHGLKYPAFILNLIKCQVELNRKVLADLAIYEPKTFKSLAALSKRRREEGFVAALGDGKEPEGIFSRVAQHH</sequence>
<reference key="1">
    <citation type="submission" date="2005-11" db="EMBL/GenBank/DDBJ databases">
        <authorList>
            <consortium name="NIH - Mammalian Gene Collection (MGC) project"/>
        </authorList>
    </citation>
    <scope>NUCLEOTIDE SEQUENCE [LARGE SCALE MRNA]</scope>
    <source>
        <strain>Crossbred X Angus</strain>
        <tissue>Liver</tissue>
    </source>
</reference>
<reference key="2">
    <citation type="journal article" date="2010" name="J. Biol. Chem.">
        <title>Properties of the C-terminal tail of human mitochondrial inner membrane protein Oxa1L and its interactions with mammalian mitochondrial ribosomes.</title>
        <authorList>
            <person name="Haque M.E."/>
            <person name="Elmore K.B."/>
            <person name="Tripathy A."/>
            <person name="Koc H."/>
            <person name="Koc E.C."/>
            <person name="Spremulli L.L."/>
        </authorList>
    </citation>
    <scope>INTERACTION WITH OXA1L</scope>
    <scope>IDENTIFICATION BY MASS SPECTROMETRY</scope>
</reference>
<reference key="3">
    <citation type="journal article" date="2001" name="J. Biol. Chem.">
        <title>Structural compensation for the deficit of rRNA with proteins in the mammalian mitochondrial ribosome. Systematic analysis of protein components of the large ribosomal subunit from mammalian mitochondria.</title>
        <authorList>
            <person name="Suzuki T."/>
            <person name="Terasaki M."/>
            <person name="Takemoto-Hori C."/>
            <person name="Hanada T."/>
            <person name="Ueda T."/>
            <person name="Wada A."/>
            <person name="Watanabe K."/>
        </authorList>
    </citation>
    <scope>PROTEIN SEQUENCE OF 10-26</scope>
    <scope>IDENTIFICATION BY MASS SPECTROMETRY</scope>
    <scope>SUBCELLULAR LOCATION</scope>
    <scope>SUBUNIT</scope>
</reference>
<reference key="4">
    <citation type="journal article" date="2006" name="J. Mol. Biol.">
        <title>A structural model for the large subunit of the mammalian mitochondrial ribosome.</title>
        <authorList>
            <person name="Mears J.A."/>
            <person name="Sharma M.R."/>
            <person name="Gutell R.R."/>
            <person name="McCook A.S."/>
            <person name="Richardson P.E."/>
            <person name="Caulfield T.R."/>
            <person name="Agrawal R.K."/>
            <person name="Harvey S.C."/>
        </authorList>
    </citation>
    <scope>STRUCTURE BY ELECTRON MICROSCOPY (12 ANGSTROMS)</scope>
    <scope>SUBCELLULAR LOCATION</scope>
</reference>
<name>RM20_BOVIN</name>
<comment type="subunit">
    <text evidence="1 3">Component of the mitochondrial ribosome large subunit (39S) which comprises a 16S rRNA and about 50 distinct proteins (PubMed:11279069). Interacts with OXA1L (PubMed:20601428).</text>
</comment>
<comment type="subcellular location">
    <subcellularLocation>
        <location evidence="1 2">Mitochondrion</location>
    </subcellularLocation>
</comment>
<comment type="similarity">
    <text evidence="4">Belongs to the bacterial ribosomal protein bL20 family.</text>
</comment>
<evidence type="ECO:0000269" key="1">
    <source>
    </source>
</evidence>
<evidence type="ECO:0000269" key="2">
    <source>
    </source>
</evidence>
<evidence type="ECO:0000269" key="3">
    <source>
    </source>
</evidence>
<evidence type="ECO:0000305" key="4"/>
<organism>
    <name type="scientific">Bos taurus</name>
    <name type="common">Bovine</name>
    <dbReference type="NCBI Taxonomy" id="9913"/>
    <lineage>
        <taxon>Eukaryota</taxon>
        <taxon>Metazoa</taxon>
        <taxon>Chordata</taxon>
        <taxon>Craniata</taxon>
        <taxon>Vertebrata</taxon>
        <taxon>Euteleostomi</taxon>
        <taxon>Mammalia</taxon>
        <taxon>Eutheria</taxon>
        <taxon>Laurasiatheria</taxon>
        <taxon>Artiodactyla</taxon>
        <taxon>Ruminantia</taxon>
        <taxon>Pecora</taxon>
        <taxon>Bovidae</taxon>
        <taxon>Bovinae</taxon>
        <taxon>Bos</taxon>
    </lineage>
</organism>
<accession>Q2TBR2</accession>